<name>THIE_CORJK</name>
<proteinExistence type="inferred from homology"/>
<sequence>MSASLDLRCYLVTGAPHEKVVDVAAAAAAGGAGVVQVRSKPISVRDLTALAVEVAAAVQKANPATRVLIDDRVDVAAALMPEHNIHGVHIGQDDLDPRLARQLLGKDAIIGLTTGTLPLVQQANEYADVIDYIGAGPFRPTPTKDSGREPLGLEGYPALVEASRVPVVAIGDVHAEDAADLAATGVAGLAIVRGIMQAENPKAYAESVVSQFSEANER</sequence>
<keyword id="KW-0460">Magnesium</keyword>
<keyword id="KW-0479">Metal-binding</keyword>
<keyword id="KW-1185">Reference proteome</keyword>
<keyword id="KW-0784">Thiamine biosynthesis</keyword>
<keyword id="KW-0808">Transferase</keyword>
<reference key="1">
    <citation type="journal article" date="2005" name="J. Bacteriol.">
        <title>Complete genome sequence and analysis of the multiresistant nosocomial pathogen Corynebacterium jeikeium K411, a lipid-requiring bacterium of the human skin flora.</title>
        <authorList>
            <person name="Tauch A."/>
            <person name="Kaiser O."/>
            <person name="Hain T."/>
            <person name="Goesmann A."/>
            <person name="Weisshaar B."/>
            <person name="Albersmeier A."/>
            <person name="Bekel T."/>
            <person name="Bischoff N."/>
            <person name="Brune I."/>
            <person name="Chakraborty T."/>
            <person name="Kalinowski J."/>
            <person name="Meyer F."/>
            <person name="Rupp O."/>
            <person name="Schneiker S."/>
            <person name="Viehoever P."/>
            <person name="Puehler A."/>
        </authorList>
    </citation>
    <scope>NUCLEOTIDE SEQUENCE [LARGE SCALE GENOMIC DNA]</scope>
    <source>
        <strain>K411</strain>
    </source>
</reference>
<organism>
    <name type="scientific">Corynebacterium jeikeium (strain K411)</name>
    <dbReference type="NCBI Taxonomy" id="306537"/>
    <lineage>
        <taxon>Bacteria</taxon>
        <taxon>Bacillati</taxon>
        <taxon>Actinomycetota</taxon>
        <taxon>Actinomycetes</taxon>
        <taxon>Mycobacteriales</taxon>
        <taxon>Corynebacteriaceae</taxon>
        <taxon>Corynebacterium</taxon>
    </lineage>
</organism>
<dbReference type="EC" id="2.5.1.3" evidence="1"/>
<dbReference type="EMBL" id="CR931997">
    <property type="protein sequence ID" value="CAI37016.1"/>
    <property type="molecule type" value="Genomic_DNA"/>
</dbReference>
<dbReference type="RefSeq" id="WP_005295694.1">
    <property type="nucleotide sequence ID" value="NC_007164.1"/>
</dbReference>
<dbReference type="SMR" id="Q4JVZ1"/>
<dbReference type="STRING" id="306537.jk0854"/>
<dbReference type="GeneID" id="92738378"/>
<dbReference type="KEGG" id="cjk:jk0854"/>
<dbReference type="eggNOG" id="COG0352">
    <property type="taxonomic scope" value="Bacteria"/>
</dbReference>
<dbReference type="HOGENOM" id="CLU_018272_3_2_11"/>
<dbReference type="OrthoDB" id="3243336at2"/>
<dbReference type="UniPathway" id="UPA00060">
    <property type="reaction ID" value="UER00141"/>
</dbReference>
<dbReference type="Proteomes" id="UP000000545">
    <property type="component" value="Chromosome"/>
</dbReference>
<dbReference type="GO" id="GO:0005737">
    <property type="term" value="C:cytoplasm"/>
    <property type="evidence" value="ECO:0007669"/>
    <property type="project" value="TreeGrafter"/>
</dbReference>
<dbReference type="GO" id="GO:0000287">
    <property type="term" value="F:magnesium ion binding"/>
    <property type="evidence" value="ECO:0007669"/>
    <property type="project" value="UniProtKB-UniRule"/>
</dbReference>
<dbReference type="GO" id="GO:0004789">
    <property type="term" value="F:thiamine-phosphate diphosphorylase activity"/>
    <property type="evidence" value="ECO:0007669"/>
    <property type="project" value="UniProtKB-UniRule"/>
</dbReference>
<dbReference type="GO" id="GO:0009228">
    <property type="term" value="P:thiamine biosynthetic process"/>
    <property type="evidence" value="ECO:0007669"/>
    <property type="project" value="UniProtKB-KW"/>
</dbReference>
<dbReference type="GO" id="GO:0009229">
    <property type="term" value="P:thiamine diphosphate biosynthetic process"/>
    <property type="evidence" value="ECO:0007669"/>
    <property type="project" value="UniProtKB-UniRule"/>
</dbReference>
<dbReference type="CDD" id="cd00564">
    <property type="entry name" value="TMP_TenI"/>
    <property type="match status" value="1"/>
</dbReference>
<dbReference type="Gene3D" id="3.20.20.70">
    <property type="entry name" value="Aldolase class I"/>
    <property type="match status" value="1"/>
</dbReference>
<dbReference type="HAMAP" id="MF_00097">
    <property type="entry name" value="TMP_synthase"/>
    <property type="match status" value="1"/>
</dbReference>
<dbReference type="InterPro" id="IPR013785">
    <property type="entry name" value="Aldolase_TIM"/>
</dbReference>
<dbReference type="InterPro" id="IPR036206">
    <property type="entry name" value="ThiamineP_synth_sf"/>
</dbReference>
<dbReference type="InterPro" id="IPR022998">
    <property type="entry name" value="ThiamineP_synth_TenI"/>
</dbReference>
<dbReference type="InterPro" id="IPR034291">
    <property type="entry name" value="TMP_synthase"/>
</dbReference>
<dbReference type="NCBIfam" id="NF000740">
    <property type="entry name" value="PRK00043.3-4"/>
    <property type="match status" value="1"/>
</dbReference>
<dbReference type="NCBIfam" id="TIGR00693">
    <property type="entry name" value="thiE"/>
    <property type="match status" value="1"/>
</dbReference>
<dbReference type="PANTHER" id="PTHR20857">
    <property type="entry name" value="THIAMINE-PHOSPHATE PYROPHOSPHORYLASE"/>
    <property type="match status" value="1"/>
</dbReference>
<dbReference type="PANTHER" id="PTHR20857:SF15">
    <property type="entry name" value="THIAMINE-PHOSPHATE SYNTHASE"/>
    <property type="match status" value="1"/>
</dbReference>
<dbReference type="Pfam" id="PF02581">
    <property type="entry name" value="TMP-TENI"/>
    <property type="match status" value="1"/>
</dbReference>
<dbReference type="SUPFAM" id="SSF51391">
    <property type="entry name" value="Thiamin phosphate synthase"/>
    <property type="match status" value="1"/>
</dbReference>
<feature type="chain" id="PRO_0000336387" description="Thiamine-phosphate synthase">
    <location>
        <begin position="1"/>
        <end position="218"/>
    </location>
</feature>
<feature type="binding site" evidence="1">
    <location>
        <begin position="36"/>
        <end position="40"/>
    </location>
    <ligand>
        <name>4-amino-2-methyl-5-(diphosphooxymethyl)pyrimidine</name>
        <dbReference type="ChEBI" id="CHEBI:57841"/>
    </ligand>
</feature>
<feature type="binding site" evidence="1">
    <location>
        <position position="70"/>
    </location>
    <ligand>
        <name>4-amino-2-methyl-5-(diphosphooxymethyl)pyrimidine</name>
        <dbReference type="ChEBI" id="CHEBI:57841"/>
    </ligand>
</feature>
<feature type="binding site" evidence="1">
    <location>
        <position position="71"/>
    </location>
    <ligand>
        <name>Mg(2+)</name>
        <dbReference type="ChEBI" id="CHEBI:18420"/>
    </ligand>
</feature>
<feature type="binding site" evidence="1">
    <location>
        <position position="94"/>
    </location>
    <ligand>
        <name>Mg(2+)</name>
        <dbReference type="ChEBI" id="CHEBI:18420"/>
    </ligand>
</feature>
<feature type="binding site" evidence="1">
    <location>
        <position position="113"/>
    </location>
    <ligand>
        <name>4-amino-2-methyl-5-(diphosphooxymethyl)pyrimidine</name>
        <dbReference type="ChEBI" id="CHEBI:57841"/>
    </ligand>
</feature>
<feature type="binding site" evidence="1">
    <location>
        <begin position="141"/>
        <end position="143"/>
    </location>
    <ligand>
        <name>2-[(2R,5Z)-2-carboxy-4-methylthiazol-5(2H)-ylidene]ethyl phosphate</name>
        <dbReference type="ChEBI" id="CHEBI:62899"/>
    </ligand>
</feature>
<feature type="binding site" evidence="1">
    <location>
        <position position="144"/>
    </location>
    <ligand>
        <name>4-amino-2-methyl-5-(diphosphooxymethyl)pyrimidine</name>
        <dbReference type="ChEBI" id="CHEBI:57841"/>
    </ligand>
</feature>
<evidence type="ECO:0000255" key="1">
    <source>
        <dbReference type="HAMAP-Rule" id="MF_00097"/>
    </source>
</evidence>
<protein>
    <recommendedName>
        <fullName evidence="1">Thiamine-phosphate synthase</fullName>
        <shortName evidence="1">TP synthase</shortName>
        <shortName evidence="1">TPS</shortName>
        <ecNumber evidence="1">2.5.1.3</ecNumber>
    </recommendedName>
    <alternativeName>
        <fullName evidence="1">Thiamine-phosphate pyrophosphorylase</fullName>
        <shortName evidence="1">TMP pyrophosphorylase</shortName>
        <shortName evidence="1">TMP-PPase</shortName>
    </alternativeName>
</protein>
<comment type="function">
    <text evidence="1">Condenses 4-methyl-5-(beta-hydroxyethyl)thiazole monophosphate (THZ-P) and 2-methyl-4-amino-5-hydroxymethyl pyrimidine pyrophosphate (HMP-PP) to form thiamine monophosphate (TMP).</text>
</comment>
<comment type="catalytic activity">
    <reaction evidence="1">
        <text>2-[(2R,5Z)-2-carboxy-4-methylthiazol-5(2H)-ylidene]ethyl phosphate + 4-amino-2-methyl-5-(diphosphooxymethyl)pyrimidine + 2 H(+) = thiamine phosphate + CO2 + diphosphate</text>
        <dbReference type="Rhea" id="RHEA:47844"/>
        <dbReference type="ChEBI" id="CHEBI:15378"/>
        <dbReference type="ChEBI" id="CHEBI:16526"/>
        <dbReference type="ChEBI" id="CHEBI:33019"/>
        <dbReference type="ChEBI" id="CHEBI:37575"/>
        <dbReference type="ChEBI" id="CHEBI:57841"/>
        <dbReference type="ChEBI" id="CHEBI:62899"/>
        <dbReference type="EC" id="2.5.1.3"/>
    </reaction>
</comment>
<comment type="catalytic activity">
    <reaction evidence="1">
        <text>2-(2-carboxy-4-methylthiazol-5-yl)ethyl phosphate + 4-amino-2-methyl-5-(diphosphooxymethyl)pyrimidine + 2 H(+) = thiamine phosphate + CO2 + diphosphate</text>
        <dbReference type="Rhea" id="RHEA:47848"/>
        <dbReference type="ChEBI" id="CHEBI:15378"/>
        <dbReference type="ChEBI" id="CHEBI:16526"/>
        <dbReference type="ChEBI" id="CHEBI:33019"/>
        <dbReference type="ChEBI" id="CHEBI:37575"/>
        <dbReference type="ChEBI" id="CHEBI:57841"/>
        <dbReference type="ChEBI" id="CHEBI:62890"/>
        <dbReference type="EC" id="2.5.1.3"/>
    </reaction>
</comment>
<comment type="catalytic activity">
    <reaction evidence="1">
        <text>4-methyl-5-(2-phosphooxyethyl)-thiazole + 4-amino-2-methyl-5-(diphosphooxymethyl)pyrimidine + H(+) = thiamine phosphate + diphosphate</text>
        <dbReference type="Rhea" id="RHEA:22328"/>
        <dbReference type="ChEBI" id="CHEBI:15378"/>
        <dbReference type="ChEBI" id="CHEBI:33019"/>
        <dbReference type="ChEBI" id="CHEBI:37575"/>
        <dbReference type="ChEBI" id="CHEBI:57841"/>
        <dbReference type="ChEBI" id="CHEBI:58296"/>
        <dbReference type="EC" id="2.5.1.3"/>
    </reaction>
</comment>
<comment type="cofactor">
    <cofactor evidence="1">
        <name>Mg(2+)</name>
        <dbReference type="ChEBI" id="CHEBI:18420"/>
    </cofactor>
    <text evidence="1">Binds 1 Mg(2+) ion per subunit.</text>
</comment>
<comment type="pathway">
    <text evidence="1">Cofactor biosynthesis; thiamine diphosphate biosynthesis; thiamine phosphate from 4-amino-2-methyl-5-diphosphomethylpyrimidine and 4-methyl-5-(2-phosphoethyl)-thiazole: step 1/1.</text>
</comment>
<comment type="similarity">
    <text evidence="1">Belongs to the thiamine-phosphate synthase family.</text>
</comment>
<accession>Q4JVZ1</accession>
<gene>
    <name evidence="1" type="primary">thiE</name>
    <name type="ordered locus">jk0854</name>
</gene>